<accession>A4SRU2</accession>
<organism>
    <name type="scientific">Aeromonas salmonicida (strain A449)</name>
    <dbReference type="NCBI Taxonomy" id="382245"/>
    <lineage>
        <taxon>Bacteria</taxon>
        <taxon>Pseudomonadati</taxon>
        <taxon>Pseudomonadota</taxon>
        <taxon>Gammaproteobacteria</taxon>
        <taxon>Aeromonadales</taxon>
        <taxon>Aeromonadaceae</taxon>
        <taxon>Aeromonas</taxon>
    </lineage>
</organism>
<reference key="1">
    <citation type="journal article" date="2008" name="BMC Genomics">
        <title>The genome of Aeromonas salmonicida subsp. salmonicida A449: insights into the evolution of a fish pathogen.</title>
        <authorList>
            <person name="Reith M.E."/>
            <person name="Singh R.K."/>
            <person name="Curtis B."/>
            <person name="Boyd J.M."/>
            <person name="Bouevitch A."/>
            <person name="Kimball J."/>
            <person name="Munholland J."/>
            <person name="Murphy C."/>
            <person name="Sarty D."/>
            <person name="Williams J."/>
            <person name="Nash J.H."/>
            <person name="Johnson S.C."/>
            <person name="Brown L.L."/>
        </authorList>
    </citation>
    <scope>NUCLEOTIDE SEQUENCE [LARGE SCALE GENOMIC DNA]</scope>
    <source>
        <strain>A449</strain>
    </source>
</reference>
<comment type="function">
    <text evidence="1">Isomerase that catalyzes the conversion of deoxy-ribose 1-phosphate (dRib-1-P) and ribose 1-phosphate (Rib-1-P) to deoxy-ribose 5-phosphate (dRib-5-P) and ribose 5-phosphate (Rib-5-P), respectively.</text>
</comment>
<comment type="catalytic activity">
    <reaction evidence="1">
        <text>2-deoxy-alpha-D-ribose 1-phosphate = 2-deoxy-D-ribose 5-phosphate</text>
        <dbReference type="Rhea" id="RHEA:27658"/>
        <dbReference type="ChEBI" id="CHEBI:57259"/>
        <dbReference type="ChEBI" id="CHEBI:62877"/>
        <dbReference type="EC" id="5.4.2.7"/>
    </reaction>
</comment>
<comment type="catalytic activity">
    <reaction evidence="1">
        <text>alpha-D-ribose 1-phosphate = D-ribose 5-phosphate</text>
        <dbReference type="Rhea" id="RHEA:18793"/>
        <dbReference type="ChEBI" id="CHEBI:57720"/>
        <dbReference type="ChEBI" id="CHEBI:78346"/>
        <dbReference type="EC" id="5.4.2.7"/>
    </reaction>
</comment>
<comment type="cofactor">
    <cofactor evidence="1">
        <name>Mn(2+)</name>
        <dbReference type="ChEBI" id="CHEBI:29035"/>
    </cofactor>
    <text evidence="1">Binds 2 manganese ions.</text>
</comment>
<comment type="pathway">
    <text evidence="1">Carbohydrate degradation; 2-deoxy-D-ribose 1-phosphate degradation; D-glyceraldehyde 3-phosphate and acetaldehyde from 2-deoxy-alpha-D-ribose 1-phosphate: step 1/2.</text>
</comment>
<comment type="subcellular location">
    <subcellularLocation>
        <location evidence="1">Cytoplasm</location>
    </subcellularLocation>
</comment>
<comment type="similarity">
    <text evidence="1">Belongs to the phosphopentomutase family.</text>
</comment>
<evidence type="ECO:0000255" key="1">
    <source>
        <dbReference type="HAMAP-Rule" id="MF_00740"/>
    </source>
</evidence>
<proteinExistence type="inferred from homology"/>
<name>DEOB_AERS4</name>
<sequence length="402" mass="43610">MKRTFILMMDSFGIGAAADADKFGDVGANTLGHIAKACAAGDIEGRSALNLPNLNKLGLGHAGELASGYFPAGLKKDIEVVGAYGFAQELSSGKDTPSGHWEIAGVPVLFEWGYFKDHHNSFPQELLDAIVEKAGLSGYLGNCHASGTQVLDDLGEEHMSTGKPILYTSADSVFQIACHEETYGLEKLYELCHIVRELLEPYNIGRVIARPFVGSGKGNFKRTGNRHDYSVLPPAPTVLDYMKEAGGQVVSIGKIADIYANKGITKQVKGTGLTELWDRTLEEVKAAGDNTIVFTNFVDFDSSYGHRRDVKGYADALEYFDSRLPELFEILQDGDVVVLTADHGCDPTWGGTDHTREYIPVLFFGKPVKAGSVGRRETFADIGQSIAAYHGLPKLEYGTSFL</sequence>
<dbReference type="EC" id="5.4.2.7" evidence="1"/>
<dbReference type="EMBL" id="CP000644">
    <property type="protein sequence ID" value="ABO91614.1"/>
    <property type="molecule type" value="Genomic_DNA"/>
</dbReference>
<dbReference type="RefSeq" id="WP_005320416.1">
    <property type="nucleotide sequence ID" value="NC_009348.1"/>
</dbReference>
<dbReference type="SMR" id="A4SRU2"/>
<dbReference type="STRING" id="29491.GCA_000820065_02508"/>
<dbReference type="KEGG" id="asa:ASA_3653"/>
<dbReference type="PATRIC" id="fig|382245.13.peg.3628"/>
<dbReference type="eggNOG" id="COG1015">
    <property type="taxonomic scope" value="Bacteria"/>
</dbReference>
<dbReference type="HOGENOM" id="CLU_053861_0_0_6"/>
<dbReference type="UniPathway" id="UPA00002">
    <property type="reaction ID" value="UER00467"/>
</dbReference>
<dbReference type="Proteomes" id="UP000000225">
    <property type="component" value="Chromosome"/>
</dbReference>
<dbReference type="GO" id="GO:0005829">
    <property type="term" value="C:cytosol"/>
    <property type="evidence" value="ECO:0007669"/>
    <property type="project" value="TreeGrafter"/>
</dbReference>
<dbReference type="GO" id="GO:0000287">
    <property type="term" value="F:magnesium ion binding"/>
    <property type="evidence" value="ECO:0007669"/>
    <property type="project" value="InterPro"/>
</dbReference>
<dbReference type="GO" id="GO:0030145">
    <property type="term" value="F:manganese ion binding"/>
    <property type="evidence" value="ECO:0007669"/>
    <property type="project" value="UniProtKB-UniRule"/>
</dbReference>
<dbReference type="GO" id="GO:0008973">
    <property type="term" value="F:phosphopentomutase activity"/>
    <property type="evidence" value="ECO:0007669"/>
    <property type="project" value="UniProtKB-UniRule"/>
</dbReference>
<dbReference type="GO" id="GO:0006018">
    <property type="term" value="P:2-deoxyribose 1-phosphate catabolic process"/>
    <property type="evidence" value="ECO:0007669"/>
    <property type="project" value="UniProtKB-UniRule"/>
</dbReference>
<dbReference type="GO" id="GO:0006015">
    <property type="term" value="P:5-phosphoribose 1-diphosphate biosynthetic process"/>
    <property type="evidence" value="ECO:0007669"/>
    <property type="project" value="UniProtKB-UniPathway"/>
</dbReference>
<dbReference type="GO" id="GO:0043094">
    <property type="term" value="P:metabolic compound salvage"/>
    <property type="evidence" value="ECO:0007669"/>
    <property type="project" value="InterPro"/>
</dbReference>
<dbReference type="GO" id="GO:0009117">
    <property type="term" value="P:nucleotide metabolic process"/>
    <property type="evidence" value="ECO:0007669"/>
    <property type="project" value="InterPro"/>
</dbReference>
<dbReference type="CDD" id="cd16009">
    <property type="entry name" value="PPM"/>
    <property type="match status" value="1"/>
</dbReference>
<dbReference type="FunFam" id="3.30.70.1250:FF:000001">
    <property type="entry name" value="Phosphopentomutase"/>
    <property type="match status" value="1"/>
</dbReference>
<dbReference type="Gene3D" id="3.40.720.10">
    <property type="entry name" value="Alkaline Phosphatase, subunit A"/>
    <property type="match status" value="1"/>
</dbReference>
<dbReference type="Gene3D" id="3.30.70.1250">
    <property type="entry name" value="Phosphopentomutase"/>
    <property type="match status" value="1"/>
</dbReference>
<dbReference type="HAMAP" id="MF_00740">
    <property type="entry name" value="Phosphopentomut"/>
    <property type="match status" value="1"/>
</dbReference>
<dbReference type="InterPro" id="IPR017850">
    <property type="entry name" value="Alkaline_phosphatase_core_sf"/>
</dbReference>
<dbReference type="InterPro" id="IPR010045">
    <property type="entry name" value="DeoB"/>
</dbReference>
<dbReference type="InterPro" id="IPR006124">
    <property type="entry name" value="Metalloenzyme"/>
</dbReference>
<dbReference type="InterPro" id="IPR024052">
    <property type="entry name" value="Phosphopentomutase_DeoB_cap_sf"/>
</dbReference>
<dbReference type="NCBIfam" id="TIGR01696">
    <property type="entry name" value="deoB"/>
    <property type="match status" value="1"/>
</dbReference>
<dbReference type="NCBIfam" id="NF003766">
    <property type="entry name" value="PRK05362.1"/>
    <property type="match status" value="1"/>
</dbReference>
<dbReference type="PANTHER" id="PTHR21110">
    <property type="entry name" value="PHOSPHOPENTOMUTASE"/>
    <property type="match status" value="1"/>
</dbReference>
<dbReference type="PANTHER" id="PTHR21110:SF0">
    <property type="entry name" value="PHOSPHOPENTOMUTASE"/>
    <property type="match status" value="1"/>
</dbReference>
<dbReference type="Pfam" id="PF01676">
    <property type="entry name" value="Metalloenzyme"/>
    <property type="match status" value="1"/>
</dbReference>
<dbReference type="PIRSF" id="PIRSF001491">
    <property type="entry name" value="Ppentomutase"/>
    <property type="match status" value="1"/>
</dbReference>
<dbReference type="SUPFAM" id="SSF53649">
    <property type="entry name" value="Alkaline phosphatase-like"/>
    <property type="match status" value="1"/>
</dbReference>
<dbReference type="SUPFAM" id="SSF143856">
    <property type="entry name" value="DeoB insert domain-like"/>
    <property type="match status" value="1"/>
</dbReference>
<protein>
    <recommendedName>
        <fullName evidence="1">Phosphopentomutase</fullName>
        <ecNumber evidence="1">5.4.2.7</ecNumber>
    </recommendedName>
    <alternativeName>
        <fullName evidence="1">Phosphodeoxyribomutase</fullName>
    </alternativeName>
</protein>
<feature type="chain" id="PRO_1000046382" description="Phosphopentomutase">
    <location>
        <begin position="1"/>
        <end position="402"/>
    </location>
</feature>
<feature type="binding site" evidence="1">
    <location>
        <position position="10"/>
    </location>
    <ligand>
        <name>Mn(2+)</name>
        <dbReference type="ChEBI" id="CHEBI:29035"/>
        <label>1</label>
    </ligand>
</feature>
<feature type="binding site" evidence="1">
    <location>
        <position position="301"/>
    </location>
    <ligand>
        <name>Mn(2+)</name>
        <dbReference type="ChEBI" id="CHEBI:29035"/>
        <label>2</label>
    </ligand>
</feature>
<feature type="binding site" evidence="1">
    <location>
        <position position="306"/>
    </location>
    <ligand>
        <name>Mn(2+)</name>
        <dbReference type="ChEBI" id="CHEBI:29035"/>
        <label>2</label>
    </ligand>
</feature>
<feature type="binding site" evidence="1">
    <location>
        <position position="342"/>
    </location>
    <ligand>
        <name>Mn(2+)</name>
        <dbReference type="ChEBI" id="CHEBI:29035"/>
        <label>1</label>
    </ligand>
</feature>
<feature type="binding site" evidence="1">
    <location>
        <position position="343"/>
    </location>
    <ligand>
        <name>Mn(2+)</name>
        <dbReference type="ChEBI" id="CHEBI:29035"/>
        <label>1</label>
    </ligand>
</feature>
<feature type="binding site" evidence="1">
    <location>
        <position position="354"/>
    </location>
    <ligand>
        <name>Mn(2+)</name>
        <dbReference type="ChEBI" id="CHEBI:29035"/>
        <label>2</label>
    </ligand>
</feature>
<gene>
    <name evidence="1" type="primary">deoB</name>
    <name type="ordered locus">ASA_3653</name>
</gene>
<keyword id="KW-0963">Cytoplasm</keyword>
<keyword id="KW-0413">Isomerase</keyword>
<keyword id="KW-0464">Manganese</keyword>
<keyword id="KW-0479">Metal-binding</keyword>